<dbReference type="EC" id="3.6.4.-" evidence="1"/>
<dbReference type="EMBL" id="FM209186">
    <property type="protein sequence ID" value="CAW29102.1"/>
    <property type="molecule type" value="Genomic_DNA"/>
</dbReference>
<dbReference type="RefSeq" id="WP_003086123.1">
    <property type="nucleotide sequence ID" value="NC_011770.1"/>
</dbReference>
<dbReference type="SMR" id="B7UXW5"/>
<dbReference type="KEGG" id="pag:PLES_43471"/>
<dbReference type="HOGENOM" id="CLU_055599_1_0_6"/>
<dbReference type="GO" id="GO:0005737">
    <property type="term" value="C:cytoplasm"/>
    <property type="evidence" value="ECO:0007669"/>
    <property type="project" value="UniProtKB-SubCell"/>
</dbReference>
<dbReference type="GO" id="GO:0048476">
    <property type="term" value="C:Holliday junction resolvase complex"/>
    <property type="evidence" value="ECO:0007669"/>
    <property type="project" value="UniProtKB-UniRule"/>
</dbReference>
<dbReference type="GO" id="GO:0005524">
    <property type="term" value="F:ATP binding"/>
    <property type="evidence" value="ECO:0007669"/>
    <property type="project" value="UniProtKB-UniRule"/>
</dbReference>
<dbReference type="GO" id="GO:0016887">
    <property type="term" value="F:ATP hydrolysis activity"/>
    <property type="evidence" value="ECO:0007669"/>
    <property type="project" value="InterPro"/>
</dbReference>
<dbReference type="GO" id="GO:0000400">
    <property type="term" value="F:four-way junction DNA binding"/>
    <property type="evidence" value="ECO:0007669"/>
    <property type="project" value="UniProtKB-UniRule"/>
</dbReference>
<dbReference type="GO" id="GO:0009378">
    <property type="term" value="F:four-way junction helicase activity"/>
    <property type="evidence" value="ECO:0007669"/>
    <property type="project" value="InterPro"/>
</dbReference>
<dbReference type="GO" id="GO:0006310">
    <property type="term" value="P:DNA recombination"/>
    <property type="evidence" value="ECO:0007669"/>
    <property type="project" value="UniProtKB-UniRule"/>
</dbReference>
<dbReference type="GO" id="GO:0006281">
    <property type="term" value="P:DNA repair"/>
    <property type="evidence" value="ECO:0007669"/>
    <property type="project" value="UniProtKB-UniRule"/>
</dbReference>
<dbReference type="CDD" id="cd00009">
    <property type="entry name" value="AAA"/>
    <property type="match status" value="1"/>
</dbReference>
<dbReference type="FunFam" id="1.10.10.10:FF:000086">
    <property type="entry name" value="Holliday junction ATP-dependent DNA helicase RuvB"/>
    <property type="match status" value="1"/>
</dbReference>
<dbReference type="FunFam" id="1.10.8.60:FF:000023">
    <property type="entry name" value="Holliday junction ATP-dependent DNA helicase RuvB"/>
    <property type="match status" value="1"/>
</dbReference>
<dbReference type="FunFam" id="3.40.50.300:FF:000073">
    <property type="entry name" value="Holliday junction ATP-dependent DNA helicase RuvB"/>
    <property type="match status" value="1"/>
</dbReference>
<dbReference type="Gene3D" id="1.10.8.60">
    <property type="match status" value="1"/>
</dbReference>
<dbReference type="Gene3D" id="3.40.50.300">
    <property type="entry name" value="P-loop containing nucleotide triphosphate hydrolases"/>
    <property type="match status" value="1"/>
</dbReference>
<dbReference type="Gene3D" id="1.10.10.10">
    <property type="entry name" value="Winged helix-like DNA-binding domain superfamily/Winged helix DNA-binding domain"/>
    <property type="match status" value="1"/>
</dbReference>
<dbReference type="HAMAP" id="MF_00016">
    <property type="entry name" value="DNA_HJ_migration_RuvB"/>
    <property type="match status" value="1"/>
</dbReference>
<dbReference type="InterPro" id="IPR003593">
    <property type="entry name" value="AAA+_ATPase"/>
</dbReference>
<dbReference type="InterPro" id="IPR041445">
    <property type="entry name" value="AAA_lid_4"/>
</dbReference>
<dbReference type="InterPro" id="IPR004605">
    <property type="entry name" value="DNA_helicase_Holl-junc_RuvB"/>
</dbReference>
<dbReference type="InterPro" id="IPR027417">
    <property type="entry name" value="P-loop_NTPase"/>
</dbReference>
<dbReference type="InterPro" id="IPR008824">
    <property type="entry name" value="RuvB-like_N"/>
</dbReference>
<dbReference type="InterPro" id="IPR008823">
    <property type="entry name" value="RuvB_C"/>
</dbReference>
<dbReference type="InterPro" id="IPR036388">
    <property type="entry name" value="WH-like_DNA-bd_sf"/>
</dbReference>
<dbReference type="InterPro" id="IPR036390">
    <property type="entry name" value="WH_DNA-bd_sf"/>
</dbReference>
<dbReference type="NCBIfam" id="NF000868">
    <property type="entry name" value="PRK00080.1"/>
    <property type="match status" value="1"/>
</dbReference>
<dbReference type="NCBIfam" id="TIGR00635">
    <property type="entry name" value="ruvB"/>
    <property type="match status" value="1"/>
</dbReference>
<dbReference type="PANTHER" id="PTHR42848">
    <property type="match status" value="1"/>
</dbReference>
<dbReference type="PANTHER" id="PTHR42848:SF1">
    <property type="entry name" value="HOLLIDAY JUNCTION BRANCH MIGRATION COMPLEX SUBUNIT RUVB"/>
    <property type="match status" value="1"/>
</dbReference>
<dbReference type="Pfam" id="PF17864">
    <property type="entry name" value="AAA_lid_4"/>
    <property type="match status" value="1"/>
</dbReference>
<dbReference type="Pfam" id="PF05491">
    <property type="entry name" value="RuvB_C"/>
    <property type="match status" value="1"/>
</dbReference>
<dbReference type="Pfam" id="PF05496">
    <property type="entry name" value="RuvB_N"/>
    <property type="match status" value="1"/>
</dbReference>
<dbReference type="SMART" id="SM00382">
    <property type="entry name" value="AAA"/>
    <property type="match status" value="1"/>
</dbReference>
<dbReference type="SUPFAM" id="SSF52540">
    <property type="entry name" value="P-loop containing nucleoside triphosphate hydrolases"/>
    <property type="match status" value="1"/>
</dbReference>
<dbReference type="SUPFAM" id="SSF46785">
    <property type="entry name" value="Winged helix' DNA-binding domain"/>
    <property type="match status" value="1"/>
</dbReference>
<keyword id="KW-0067">ATP-binding</keyword>
<keyword id="KW-0963">Cytoplasm</keyword>
<keyword id="KW-0227">DNA damage</keyword>
<keyword id="KW-0233">DNA recombination</keyword>
<keyword id="KW-0234">DNA repair</keyword>
<keyword id="KW-0238">DNA-binding</keyword>
<keyword id="KW-0378">Hydrolase</keyword>
<keyword id="KW-0547">Nucleotide-binding</keyword>
<gene>
    <name evidence="1" type="primary">ruvB</name>
    <name type="ordered locus">PLES_43471</name>
</gene>
<accession>B7UXW5</accession>
<reference key="1">
    <citation type="journal article" date="2009" name="Genome Res.">
        <title>Newly introduced genomic prophage islands are critical determinants of in vivo competitiveness in the Liverpool epidemic strain of Pseudomonas aeruginosa.</title>
        <authorList>
            <person name="Winstanley C."/>
            <person name="Langille M.G.I."/>
            <person name="Fothergill J.L."/>
            <person name="Kukavica-Ibrulj I."/>
            <person name="Paradis-Bleau C."/>
            <person name="Sanschagrin F."/>
            <person name="Thomson N.R."/>
            <person name="Winsor G.L."/>
            <person name="Quail M.A."/>
            <person name="Lennard N."/>
            <person name="Bignell A."/>
            <person name="Clarke L."/>
            <person name="Seeger K."/>
            <person name="Saunders D."/>
            <person name="Harris D."/>
            <person name="Parkhill J."/>
            <person name="Hancock R.E.W."/>
            <person name="Brinkman F.S.L."/>
            <person name="Levesque R.C."/>
        </authorList>
    </citation>
    <scope>NUCLEOTIDE SEQUENCE [LARGE SCALE GENOMIC DNA]</scope>
    <source>
        <strain>LESB58</strain>
    </source>
</reference>
<protein>
    <recommendedName>
        <fullName evidence="1">Holliday junction branch migration complex subunit RuvB</fullName>
        <ecNumber evidence="1">3.6.4.-</ecNumber>
    </recommendedName>
</protein>
<proteinExistence type="inferred from homology"/>
<evidence type="ECO:0000255" key="1">
    <source>
        <dbReference type="HAMAP-Rule" id="MF_00016"/>
    </source>
</evidence>
<name>RUVB_PSEA8</name>
<comment type="function">
    <text evidence="1">The RuvA-RuvB-RuvC complex processes Holliday junction (HJ) DNA during genetic recombination and DNA repair, while the RuvA-RuvB complex plays an important role in the rescue of blocked DNA replication forks via replication fork reversal (RFR). RuvA specifically binds to HJ cruciform DNA, conferring on it an open structure. The RuvB hexamer acts as an ATP-dependent pump, pulling dsDNA into and through the RuvAB complex. RuvB forms 2 homohexamers on either side of HJ DNA bound by 1 or 2 RuvA tetramers; 4 subunits per hexamer contact DNA at a time. Coordinated motions by a converter formed by DNA-disengaged RuvB subunits stimulates ATP hydrolysis and nucleotide exchange. Immobilization of the converter enables RuvB to convert the ATP-contained energy into a lever motion, pulling 2 nucleotides of DNA out of the RuvA tetramer per ATP hydrolyzed, thus driving DNA branch migration. The RuvB motors rotate together with the DNA substrate, which together with the progressing nucleotide cycle form the mechanistic basis for DNA recombination by continuous HJ branch migration. Branch migration allows RuvC to scan DNA until it finds its consensus sequence, where it cleaves and resolves cruciform DNA.</text>
</comment>
<comment type="catalytic activity">
    <reaction evidence="1">
        <text>ATP + H2O = ADP + phosphate + H(+)</text>
        <dbReference type="Rhea" id="RHEA:13065"/>
        <dbReference type="ChEBI" id="CHEBI:15377"/>
        <dbReference type="ChEBI" id="CHEBI:15378"/>
        <dbReference type="ChEBI" id="CHEBI:30616"/>
        <dbReference type="ChEBI" id="CHEBI:43474"/>
        <dbReference type="ChEBI" id="CHEBI:456216"/>
    </reaction>
</comment>
<comment type="subunit">
    <text evidence="1">Homohexamer. Forms an RuvA(8)-RuvB(12)-Holliday junction (HJ) complex. HJ DNA is sandwiched between 2 RuvA tetramers; dsDNA enters through RuvA and exits via RuvB. An RuvB hexamer assembles on each DNA strand where it exits the tetramer. Each RuvB hexamer is contacted by two RuvA subunits (via domain III) on 2 adjacent RuvB subunits; this complex drives branch migration. In the full resolvosome a probable DNA-RuvA(4)-RuvB(12)-RuvC(2) complex forms which resolves the HJ.</text>
</comment>
<comment type="subcellular location">
    <subcellularLocation>
        <location evidence="1">Cytoplasm</location>
    </subcellularLocation>
</comment>
<comment type="domain">
    <text evidence="1">Has 3 domains, the large (RuvB-L) and small ATPase (RuvB-S) domains and the C-terminal head (RuvB-H) domain. The head domain binds DNA, while the ATPase domains jointly bind ATP, ADP or are empty depending on the state of the subunit in the translocation cycle. During a single DNA translocation step the structure of each domain remains the same, but their relative positions change.</text>
</comment>
<comment type="similarity">
    <text evidence="1">Belongs to the RuvB family.</text>
</comment>
<feature type="chain" id="PRO_1000195225" description="Holliday junction branch migration complex subunit RuvB">
    <location>
        <begin position="1"/>
        <end position="352"/>
    </location>
</feature>
<feature type="region of interest" description="Large ATPase domain (RuvB-L)" evidence="1">
    <location>
        <begin position="4"/>
        <end position="185"/>
    </location>
</feature>
<feature type="region of interest" description="Small ATPAse domain (RuvB-S)" evidence="1">
    <location>
        <begin position="186"/>
        <end position="256"/>
    </location>
</feature>
<feature type="region of interest" description="Head domain (RuvB-H)" evidence="1">
    <location>
        <begin position="259"/>
        <end position="352"/>
    </location>
</feature>
<feature type="binding site" evidence="1">
    <location>
        <position position="24"/>
    </location>
    <ligand>
        <name>ATP</name>
        <dbReference type="ChEBI" id="CHEBI:30616"/>
    </ligand>
</feature>
<feature type="binding site" evidence="1">
    <location>
        <position position="25"/>
    </location>
    <ligand>
        <name>ATP</name>
        <dbReference type="ChEBI" id="CHEBI:30616"/>
    </ligand>
</feature>
<feature type="binding site" evidence="1">
    <location>
        <position position="66"/>
    </location>
    <ligand>
        <name>ATP</name>
        <dbReference type="ChEBI" id="CHEBI:30616"/>
    </ligand>
</feature>
<feature type="binding site" evidence="1">
    <location>
        <position position="69"/>
    </location>
    <ligand>
        <name>ATP</name>
        <dbReference type="ChEBI" id="CHEBI:30616"/>
    </ligand>
</feature>
<feature type="binding site" evidence="1">
    <location>
        <position position="70"/>
    </location>
    <ligand>
        <name>ATP</name>
        <dbReference type="ChEBI" id="CHEBI:30616"/>
    </ligand>
</feature>
<feature type="binding site" evidence="1">
    <location>
        <position position="70"/>
    </location>
    <ligand>
        <name>Mg(2+)</name>
        <dbReference type="ChEBI" id="CHEBI:18420"/>
    </ligand>
</feature>
<feature type="binding site" evidence="1">
    <location>
        <position position="71"/>
    </location>
    <ligand>
        <name>ATP</name>
        <dbReference type="ChEBI" id="CHEBI:30616"/>
    </ligand>
</feature>
<feature type="binding site" evidence="1">
    <location>
        <begin position="132"/>
        <end position="134"/>
    </location>
    <ligand>
        <name>ATP</name>
        <dbReference type="ChEBI" id="CHEBI:30616"/>
    </ligand>
</feature>
<feature type="binding site" evidence="1">
    <location>
        <position position="175"/>
    </location>
    <ligand>
        <name>ATP</name>
        <dbReference type="ChEBI" id="CHEBI:30616"/>
    </ligand>
</feature>
<feature type="binding site" evidence="1">
    <location>
        <position position="185"/>
    </location>
    <ligand>
        <name>ATP</name>
        <dbReference type="ChEBI" id="CHEBI:30616"/>
    </ligand>
</feature>
<feature type="binding site" evidence="1">
    <location>
        <position position="222"/>
    </location>
    <ligand>
        <name>ATP</name>
        <dbReference type="ChEBI" id="CHEBI:30616"/>
    </ligand>
</feature>
<feature type="binding site" evidence="1">
    <location>
        <position position="295"/>
    </location>
    <ligand>
        <name>DNA</name>
        <dbReference type="ChEBI" id="CHEBI:16991"/>
    </ligand>
</feature>
<feature type="binding site" evidence="1">
    <location>
        <position position="314"/>
    </location>
    <ligand>
        <name>DNA</name>
        <dbReference type="ChEBI" id="CHEBI:16991"/>
    </ligand>
</feature>
<feature type="binding site" evidence="1">
    <location>
        <position position="319"/>
    </location>
    <ligand>
        <name>DNA</name>
        <dbReference type="ChEBI" id="CHEBI:16991"/>
    </ligand>
</feature>
<organism>
    <name type="scientific">Pseudomonas aeruginosa (strain LESB58)</name>
    <dbReference type="NCBI Taxonomy" id="557722"/>
    <lineage>
        <taxon>Bacteria</taxon>
        <taxon>Pseudomonadati</taxon>
        <taxon>Pseudomonadota</taxon>
        <taxon>Gammaproteobacteria</taxon>
        <taxon>Pseudomonadales</taxon>
        <taxon>Pseudomonadaceae</taxon>
        <taxon>Pseudomonas</taxon>
    </lineage>
</organism>
<sequence length="352" mass="38933">MIEPDRLISAVSGRERDEQLDRAIRPLKLADYIGQPSVREQMELFIHAARGRQEALDHTLIFGPPGLGKTTLANIIAQEMGVSIKSTSGPVLERPGDLAALLTNLEAGDVLFVDEIHRLSPIVEEVLYPAMEDFQLDIMIGEGPAARSIKLDLPPFTLVGATTRAGMLTNPLRDRFGIVQRLEFYNVEDLATIVSRSAGILGLEIEPQGAAEIAKRARGTPRIANRLLRRVRDFAEVRGQGDITRVIADKALNLLDVDERGFDHLDRRLLLTMIDKFDGGPVGIDNLAAALSEERHTIEDVLEPYLIQQGYIMRTPRGRVVTRHAYLHFGLNIPKRLGPGVTTDLFTSEDGN</sequence>